<dbReference type="EMBL" id="X72302">
    <property type="protein sequence ID" value="CAA51050.1"/>
    <property type="molecule type" value="mRNA"/>
</dbReference>
<dbReference type="EMBL" id="X72303">
    <property type="protein sequence ID" value="CAA51051.1"/>
    <property type="molecule type" value="Genomic_DNA"/>
</dbReference>
<dbReference type="EMBL" id="AE014297">
    <property type="protein sequence ID" value="AAF55423.1"/>
    <property type="molecule type" value="Genomic_DNA"/>
</dbReference>
<dbReference type="EMBL" id="BT023233">
    <property type="protein sequence ID" value="AAY55649.1"/>
    <property type="molecule type" value="mRNA"/>
</dbReference>
<dbReference type="PIR" id="S34769">
    <property type="entry name" value="S34769"/>
</dbReference>
<dbReference type="RefSeq" id="NP_001262668.1">
    <property type="nucleotide sequence ID" value="NM_001275739.1"/>
</dbReference>
<dbReference type="RefSeq" id="NP_524386.1">
    <property type="nucleotide sequence ID" value="NM_079662.3"/>
</dbReference>
<dbReference type="BioGRID" id="67137">
    <property type="interactions" value="8"/>
</dbReference>
<dbReference type="FunCoup" id="Q07892">
    <property type="interactions" value="49"/>
</dbReference>
<dbReference type="IntAct" id="Q07892">
    <property type="interactions" value="8"/>
</dbReference>
<dbReference type="STRING" id="7227.FBpp0082885"/>
<dbReference type="PaxDb" id="7227-FBpp0082885"/>
<dbReference type="DNASU" id="42101"/>
<dbReference type="EnsemblMetazoa" id="FBtr0083444">
    <property type="protein sequence ID" value="FBpp0082885"/>
    <property type="gene ID" value="FBgn0000564"/>
</dbReference>
<dbReference type="EnsemblMetazoa" id="FBtr0334930">
    <property type="protein sequence ID" value="FBpp0306950"/>
    <property type="gene ID" value="FBgn0000564"/>
</dbReference>
<dbReference type="GeneID" id="42101"/>
<dbReference type="KEGG" id="dme:Dmel_CG5400"/>
<dbReference type="AGR" id="FB:FBgn0000564"/>
<dbReference type="CTD" id="103935"/>
<dbReference type="FlyBase" id="FBgn0000564">
    <property type="gene designation" value="Eh"/>
</dbReference>
<dbReference type="VEuPathDB" id="VectorBase:FBgn0000564"/>
<dbReference type="eggNOG" id="ENOG502S767">
    <property type="taxonomic scope" value="Eukaryota"/>
</dbReference>
<dbReference type="HOGENOM" id="CLU_175797_1_0_1"/>
<dbReference type="InParanoid" id="Q07892"/>
<dbReference type="OMA" id="IGHYTHK"/>
<dbReference type="OrthoDB" id="6432957at2759"/>
<dbReference type="PhylomeDB" id="Q07892"/>
<dbReference type="BioGRID-ORCS" id="42101">
    <property type="hits" value="0 hits in 1 CRISPR screen"/>
</dbReference>
<dbReference type="ChiTaRS" id="Eh">
    <property type="organism name" value="fly"/>
</dbReference>
<dbReference type="GenomeRNAi" id="42101"/>
<dbReference type="PRO" id="PR:Q07892"/>
<dbReference type="Proteomes" id="UP000000803">
    <property type="component" value="Chromosome 3R"/>
</dbReference>
<dbReference type="Bgee" id="FBgn0000564">
    <property type="expression patterns" value="Expressed in embryonic central brain neuron (Drosophila) and 11 other cell types or tissues"/>
</dbReference>
<dbReference type="ExpressionAtlas" id="Q07892">
    <property type="expression patterns" value="baseline and differential"/>
</dbReference>
<dbReference type="GO" id="GO:0005615">
    <property type="term" value="C:extracellular space"/>
    <property type="evidence" value="ECO:0000255"/>
    <property type="project" value="FlyBase"/>
</dbReference>
<dbReference type="GO" id="GO:0008255">
    <property type="term" value="F:ecdysis-triggering hormone activity"/>
    <property type="evidence" value="ECO:0007669"/>
    <property type="project" value="InterPro"/>
</dbReference>
<dbReference type="GO" id="GO:0008031">
    <property type="term" value="F:eclosion hormone activity"/>
    <property type="evidence" value="ECO:0000250"/>
    <property type="project" value="FlyBase"/>
</dbReference>
<dbReference type="GO" id="GO:0005184">
    <property type="term" value="F:neuropeptide hormone activity"/>
    <property type="evidence" value="ECO:0000304"/>
    <property type="project" value="FlyBase"/>
</dbReference>
<dbReference type="GO" id="GO:0018990">
    <property type="term" value="P:ecdysis, chitin-based cuticle"/>
    <property type="evidence" value="ECO:0000315"/>
    <property type="project" value="FlyBase"/>
</dbReference>
<dbReference type="GO" id="GO:0007562">
    <property type="term" value="P:eclosion"/>
    <property type="evidence" value="ECO:0000304"/>
    <property type="project" value="FlyBase"/>
</dbReference>
<dbReference type="GO" id="GO:0007218">
    <property type="term" value="P:neuropeptide signaling pathway"/>
    <property type="evidence" value="ECO:0000304"/>
    <property type="project" value="FlyBase"/>
</dbReference>
<dbReference type="GO" id="GO:0007563">
    <property type="term" value="P:regulation of eclosion"/>
    <property type="evidence" value="ECO:0000250"/>
    <property type="project" value="FlyBase"/>
</dbReference>
<dbReference type="InterPro" id="IPR006825">
    <property type="entry name" value="Eclosion"/>
</dbReference>
<dbReference type="Pfam" id="PF04736">
    <property type="entry name" value="Eclosion"/>
    <property type="match status" value="1"/>
</dbReference>
<dbReference type="PIRSF" id="PIRSF001859">
    <property type="entry name" value="Eclosion"/>
    <property type="match status" value="1"/>
</dbReference>
<feature type="signal peptide" evidence="2">
    <location>
        <begin position="1"/>
        <end position="17"/>
    </location>
</feature>
<feature type="chain" id="PRO_0000021144" description="Eclosion hormone">
    <location>
        <begin position="18"/>
        <end position="97"/>
    </location>
</feature>
<feature type="disulfide bond" evidence="1">
    <location>
        <begin position="48"/>
        <end position="72"/>
    </location>
</feature>
<feature type="disulfide bond" evidence="1">
    <location>
        <begin position="52"/>
        <end position="68"/>
    </location>
</feature>
<feature type="disulfide bond" evidence="1">
    <location>
        <begin position="55"/>
        <end position="83"/>
    </location>
</feature>
<protein>
    <recommendedName>
        <fullName>Eclosion hormone</fullName>
    </recommendedName>
    <alternativeName>
        <fullName>EH</fullName>
    </alternativeName>
    <alternativeName>
        <fullName>Ecdysis activator</fullName>
    </alternativeName>
</protein>
<reference key="1">
    <citation type="journal article" date="1993" name="Eur. J. Biochem.">
        <title>Isolation, characterization and expression of the eclosion hormone gene of Drosophila melanogaster.</title>
        <authorList>
            <person name="Horodyski F.M."/>
            <person name="Ewer J."/>
            <person name="Riddiford L.M."/>
            <person name="Truman J.W."/>
        </authorList>
    </citation>
    <scope>NUCLEOTIDE SEQUENCE [GENOMIC DNA / MRNA]</scope>
    <scope>FUNCTION</scope>
    <scope>TISSUE SPECIFICITY</scope>
</reference>
<reference key="2">
    <citation type="journal article" date="2000" name="Science">
        <title>The genome sequence of Drosophila melanogaster.</title>
        <authorList>
            <person name="Adams M.D."/>
            <person name="Celniker S.E."/>
            <person name="Holt R.A."/>
            <person name="Evans C.A."/>
            <person name="Gocayne J.D."/>
            <person name="Amanatides P.G."/>
            <person name="Scherer S.E."/>
            <person name="Li P.W."/>
            <person name="Hoskins R.A."/>
            <person name="Galle R.F."/>
            <person name="George R.A."/>
            <person name="Lewis S.E."/>
            <person name="Richards S."/>
            <person name="Ashburner M."/>
            <person name="Henderson S.N."/>
            <person name="Sutton G.G."/>
            <person name="Wortman J.R."/>
            <person name="Yandell M.D."/>
            <person name="Zhang Q."/>
            <person name="Chen L.X."/>
            <person name="Brandon R.C."/>
            <person name="Rogers Y.-H.C."/>
            <person name="Blazej R.G."/>
            <person name="Champe M."/>
            <person name="Pfeiffer B.D."/>
            <person name="Wan K.H."/>
            <person name="Doyle C."/>
            <person name="Baxter E.G."/>
            <person name="Helt G."/>
            <person name="Nelson C.R."/>
            <person name="Miklos G.L.G."/>
            <person name="Abril J.F."/>
            <person name="Agbayani A."/>
            <person name="An H.-J."/>
            <person name="Andrews-Pfannkoch C."/>
            <person name="Baldwin D."/>
            <person name="Ballew R.M."/>
            <person name="Basu A."/>
            <person name="Baxendale J."/>
            <person name="Bayraktaroglu L."/>
            <person name="Beasley E.M."/>
            <person name="Beeson K.Y."/>
            <person name="Benos P.V."/>
            <person name="Berman B.P."/>
            <person name="Bhandari D."/>
            <person name="Bolshakov S."/>
            <person name="Borkova D."/>
            <person name="Botchan M.R."/>
            <person name="Bouck J."/>
            <person name="Brokstein P."/>
            <person name="Brottier P."/>
            <person name="Burtis K.C."/>
            <person name="Busam D.A."/>
            <person name="Butler H."/>
            <person name="Cadieu E."/>
            <person name="Center A."/>
            <person name="Chandra I."/>
            <person name="Cherry J.M."/>
            <person name="Cawley S."/>
            <person name="Dahlke C."/>
            <person name="Davenport L.B."/>
            <person name="Davies P."/>
            <person name="de Pablos B."/>
            <person name="Delcher A."/>
            <person name="Deng Z."/>
            <person name="Mays A.D."/>
            <person name="Dew I."/>
            <person name="Dietz S.M."/>
            <person name="Dodson K."/>
            <person name="Doup L.E."/>
            <person name="Downes M."/>
            <person name="Dugan-Rocha S."/>
            <person name="Dunkov B.C."/>
            <person name="Dunn P."/>
            <person name="Durbin K.J."/>
            <person name="Evangelista C.C."/>
            <person name="Ferraz C."/>
            <person name="Ferriera S."/>
            <person name="Fleischmann W."/>
            <person name="Fosler C."/>
            <person name="Gabrielian A.E."/>
            <person name="Garg N.S."/>
            <person name="Gelbart W.M."/>
            <person name="Glasser K."/>
            <person name="Glodek A."/>
            <person name="Gong F."/>
            <person name="Gorrell J.H."/>
            <person name="Gu Z."/>
            <person name="Guan P."/>
            <person name="Harris M."/>
            <person name="Harris N.L."/>
            <person name="Harvey D.A."/>
            <person name="Heiman T.J."/>
            <person name="Hernandez J.R."/>
            <person name="Houck J."/>
            <person name="Hostin D."/>
            <person name="Houston K.A."/>
            <person name="Howland T.J."/>
            <person name="Wei M.-H."/>
            <person name="Ibegwam C."/>
            <person name="Jalali M."/>
            <person name="Kalush F."/>
            <person name="Karpen G.H."/>
            <person name="Ke Z."/>
            <person name="Kennison J.A."/>
            <person name="Ketchum K.A."/>
            <person name="Kimmel B.E."/>
            <person name="Kodira C.D."/>
            <person name="Kraft C.L."/>
            <person name="Kravitz S."/>
            <person name="Kulp D."/>
            <person name="Lai Z."/>
            <person name="Lasko P."/>
            <person name="Lei Y."/>
            <person name="Levitsky A.A."/>
            <person name="Li J.H."/>
            <person name="Li Z."/>
            <person name="Liang Y."/>
            <person name="Lin X."/>
            <person name="Liu X."/>
            <person name="Mattei B."/>
            <person name="McIntosh T.C."/>
            <person name="McLeod M.P."/>
            <person name="McPherson D."/>
            <person name="Merkulov G."/>
            <person name="Milshina N.V."/>
            <person name="Mobarry C."/>
            <person name="Morris J."/>
            <person name="Moshrefi A."/>
            <person name="Mount S.M."/>
            <person name="Moy M."/>
            <person name="Murphy B."/>
            <person name="Murphy L."/>
            <person name="Muzny D.M."/>
            <person name="Nelson D.L."/>
            <person name="Nelson D.R."/>
            <person name="Nelson K.A."/>
            <person name="Nixon K."/>
            <person name="Nusskern D.R."/>
            <person name="Pacleb J.M."/>
            <person name="Palazzolo M."/>
            <person name="Pittman G.S."/>
            <person name="Pan S."/>
            <person name="Pollard J."/>
            <person name="Puri V."/>
            <person name="Reese M.G."/>
            <person name="Reinert K."/>
            <person name="Remington K."/>
            <person name="Saunders R.D.C."/>
            <person name="Scheeler F."/>
            <person name="Shen H."/>
            <person name="Shue B.C."/>
            <person name="Siden-Kiamos I."/>
            <person name="Simpson M."/>
            <person name="Skupski M.P."/>
            <person name="Smith T.J."/>
            <person name="Spier E."/>
            <person name="Spradling A.C."/>
            <person name="Stapleton M."/>
            <person name="Strong R."/>
            <person name="Sun E."/>
            <person name="Svirskas R."/>
            <person name="Tector C."/>
            <person name="Turner R."/>
            <person name="Venter E."/>
            <person name="Wang A.H."/>
            <person name="Wang X."/>
            <person name="Wang Z.-Y."/>
            <person name="Wassarman D.A."/>
            <person name="Weinstock G.M."/>
            <person name="Weissenbach J."/>
            <person name="Williams S.M."/>
            <person name="Woodage T."/>
            <person name="Worley K.C."/>
            <person name="Wu D."/>
            <person name="Yang S."/>
            <person name="Yao Q.A."/>
            <person name="Ye J."/>
            <person name="Yeh R.-F."/>
            <person name="Zaveri J.S."/>
            <person name="Zhan M."/>
            <person name="Zhang G."/>
            <person name="Zhao Q."/>
            <person name="Zheng L."/>
            <person name="Zheng X.H."/>
            <person name="Zhong F.N."/>
            <person name="Zhong W."/>
            <person name="Zhou X."/>
            <person name="Zhu S.C."/>
            <person name="Zhu X."/>
            <person name="Smith H.O."/>
            <person name="Gibbs R.A."/>
            <person name="Myers E.W."/>
            <person name="Rubin G.M."/>
            <person name="Venter J.C."/>
        </authorList>
    </citation>
    <scope>NUCLEOTIDE SEQUENCE [LARGE SCALE GENOMIC DNA]</scope>
    <source>
        <strain>Berkeley</strain>
    </source>
</reference>
<reference key="3">
    <citation type="journal article" date="2002" name="Genome Biol.">
        <title>Annotation of the Drosophila melanogaster euchromatic genome: a systematic review.</title>
        <authorList>
            <person name="Misra S."/>
            <person name="Crosby M.A."/>
            <person name="Mungall C.J."/>
            <person name="Matthews B.B."/>
            <person name="Campbell K.S."/>
            <person name="Hradecky P."/>
            <person name="Huang Y."/>
            <person name="Kaminker J.S."/>
            <person name="Millburn G.H."/>
            <person name="Prochnik S.E."/>
            <person name="Smith C.D."/>
            <person name="Tupy J.L."/>
            <person name="Whitfield E.J."/>
            <person name="Bayraktaroglu L."/>
            <person name="Berman B.P."/>
            <person name="Bettencourt B.R."/>
            <person name="Celniker S.E."/>
            <person name="de Grey A.D.N.J."/>
            <person name="Drysdale R.A."/>
            <person name="Harris N.L."/>
            <person name="Richter J."/>
            <person name="Russo S."/>
            <person name="Schroeder A.J."/>
            <person name="Shu S.Q."/>
            <person name="Stapleton M."/>
            <person name="Yamada C."/>
            <person name="Ashburner M."/>
            <person name="Gelbart W.M."/>
            <person name="Rubin G.M."/>
            <person name="Lewis S.E."/>
        </authorList>
    </citation>
    <scope>GENOME REANNOTATION</scope>
    <source>
        <strain>Berkeley</strain>
    </source>
</reference>
<reference key="4">
    <citation type="submission" date="2005-05" db="EMBL/GenBank/DDBJ databases">
        <authorList>
            <person name="Stapleton M."/>
            <person name="Carlson J.W."/>
            <person name="Chavez C."/>
            <person name="Frise E."/>
            <person name="George R.A."/>
            <person name="Pacleb J.M."/>
            <person name="Park S."/>
            <person name="Wan K.H."/>
            <person name="Yu C."/>
            <person name="Celniker S.E."/>
        </authorList>
    </citation>
    <scope>NUCLEOTIDE SEQUENCE [LARGE SCALE MRNA]</scope>
    <source>
        <strain>Berkeley</strain>
    </source>
</reference>
<keyword id="KW-1015">Disulfide bond</keyword>
<keyword id="KW-0372">Hormone</keyword>
<keyword id="KW-0527">Neuropeptide</keyword>
<keyword id="KW-1185">Reference proteome</keyword>
<keyword id="KW-0964">Secreted</keyword>
<keyword id="KW-0732">Signal</keyword>
<gene>
    <name type="primary">Eh</name>
    <name type="ORF">CG5400</name>
</gene>
<proteinExistence type="evidence at transcript level"/>
<comment type="function">
    <text evidence="3">Neuropeptide that triggers the performance of ecdysis behaviors at the end of a molt. It triggers adult behavior patterns: larval, pupal and adult ecdysis, and plasticization during the molt.</text>
</comment>
<comment type="subcellular location">
    <subcellularLocation>
        <location>Secreted</location>
    </subcellularLocation>
</comment>
<comment type="tissue specificity">
    <text evidence="3">Expressed in a single pair of brain neurons which extend their processes the entire length of the central nervous system and also to the corpora cardiaca portion of the ring gland. These cells show massive depletion of immunoreactive Eh at ecdysis.</text>
</comment>
<comment type="similarity">
    <text evidence="4">Belongs to the insect eclosion hormone family.</text>
</comment>
<sequence>MNCKPLILCTFVAVAMCLVHFGNALPAISHYTHKRFDSMGGIDFVQVCLNNCVQCKTMLGDYFQGQTCALSCLKFKGKAIPDCEDIASIAPFLNALE</sequence>
<evidence type="ECO:0000250" key="1"/>
<evidence type="ECO:0000255" key="2"/>
<evidence type="ECO:0000269" key="3">
    <source>
    </source>
</evidence>
<evidence type="ECO:0000305" key="4"/>
<name>ECLH_DROME</name>
<organism>
    <name type="scientific">Drosophila melanogaster</name>
    <name type="common">Fruit fly</name>
    <dbReference type="NCBI Taxonomy" id="7227"/>
    <lineage>
        <taxon>Eukaryota</taxon>
        <taxon>Metazoa</taxon>
        <taxon>Ecdysozoa</taxon>
        <taxon>Arthropoda</taxon>
        <taxon>Hexapoda</taxon>
        <taxon>Insecta</taxon>
        <taxon>Pterygota</taxon>
        <taxon>Neoptera</taxon>
        <taxon>Endopterygota</taxon>
        <taxon>Diptera</taxon>
        <taxon>Brachycera</taxon>
        <taxon>Muscomorpha</taxon>
        <taxon>Ephydroidea</taxon>
        <taxon>Drosophilidae</taxon>
        <taxon>Drosophila</taxon>
        <taxon>Sophophora</taxon>
    </lineage>
</organism>
<accession>Q07892</accession>
<accession>Q4V3X3</accession>
<accession>Q9VEJ8</accession>